<sequence>MAIASGSWVATVNHHANPHSFTSPTKPIFFLSQKPHNFHVCSSRCSMVLEEDEKKSPSPKEDKWPFFEPGPNDLNRVLSRFLRDPETRKLSSEFYEKAKENSELRTTKHLISYLVSSKSWDLLVSVCEDLREHKALPDGQTCSNLIRSCIRDRKFRITHCLLSVFRSDKSLAVSASDAAMKGFNKLQMYSSTIQVFDRLKQSVGVEPSPGCYCRIMEAHEKIGENHKVVELFQEFKSQRLSFLAKESGSIYTIVCSSLAKSGRAFEALEVLEEMKDKGIPESSELYSMLIRAFAEAREVVITEKLFKEAGGKKLLKDPEMCLKVVLMYVREGNMETTLEVVAAMRKAELKVTDCILCAIVNGFSKQRGFAEAVKVYEWAMKEECEAGQVTYAIAINAYCRLEKYNKAEMLFDEMVKKGFDKCVVAYSNIMDMYGKTRRLSDAVRLMAKMKQRGCKPNIWIYNSLIDMHGRAMDLRRAEKIWKEMKRAKVLPDKVSYTSMISAYNRSKELERCVELYQEFRMNRGKIDRAMAGIMVGVFSKTSRIDELMRLLQDMKVEGTRLDARLYSSALNALRDAGLNSQIRWLQESFDAAQTSTSKYSNTKNTGTLS</sequence>
<feature type="transit peptide" description="Chloroplast" evidence="1">
    <location>
        <begin position="1"/>
        <end position="44"/>
    </location>
</feature>
<feature type="chain" id="PRO_0000363516" description="Pentatricopeptide repeat-containing protein At5g13770, chloroplastic">
    <location>
        <begin position="45"/>
        <end position="609"/>
    </location>
</feature>
<feature type="repeat" description="PPR 1">
    <location>
        <begin position="103"/>
        <end position="137"/>
    </location>
</feature>
<feature type="repeat" description="PPR 2">
    <location>
        <begin position="138"/>
        <end position="168"/>
    </location>
</feature>
<feature type="repeat" description="PPR 3">
    <location>
        <begin position="172"/>
        <end position="207"/>
    </location>
</feature>
<feature type="repeat" description="PPR 4">
    <location>
        <begin position="208"/>
        <end position="242"/>
    </location>
</feature>
<feature type="repeat" description="PPR 5">
    <location>
        <begin position="247"/>
        <end position="281"/>
    </location>
</feature>
<feature type="repeat" description="PPR 6">
    <location>
        <begin position="282"/>
        <end position="316"/>
    </location>
</feature>
<feature type="repeat" description="PPR 7">
    <location>
        <begin position="317"/>
        <end position="351"/>
    </location>
</feature>
<feature type="repeat" description="PPR 8">
    <location>
        <begin position="352"/>
        <end position="386"/>
    </location>
</feature>
<feature type="repeat" description="PPR 9">
    <location>
        <begin position="387"/>
        <end position="421"/>
    </location>
</feature>
<feature type="repeat" description="PPR 10">
    <location>
        <begin position="422"/>
        <end position="456"/>
    </location>
</feature>
<feature type="repeat" description="PPR 11">
    <location>
        <begin position="457"/>
        <end position="491"/>
    </location>
</feature>
<feature type="repeat" description="PPR 12">
    <location>
        <begin position="492"/>
        <end position="526"/>
    </location>
</feature>
<feature type="repeat" description="PPR 13">
    <location>
        <begin position="527"/>
        <end position="561"/>
    </location>
</feature>
<comment type="subcellular location">
    <subcellularLocation>
        <location evidence="2">Plastid</location>
        <location evidence="2">Chloroplast</location>
    </subcellularLocation>
</comment>
<comment type="similarity">
    <text evidence="2">Belongs to the PPR family. P subfamily.</text>
</comment>
<comment type="sequence caution" evidence="2">
    <conflict type="erroneous initiation">
        <sequence resource="EMBL-CDS" id="BAB10598"/>
    </conflict>
</comment>
<comment type="online information" name="Pentatricopeptide repeat proteins">
    <link uri="https://ppr.plantenergy.uwa.edu.au"/>
</comment>
<protein>
    <recommendedName>
        <fullName>Pentatricopeptide repeat-containing protein At5g13770, chloroplastic</fullName>
    </recommendedName>
</protein>
<reference key="1">
    <citation type="journal article" date="1998" name="DNA Res.">
        <title>Structural analysis of Arabidopsis thaliana chromosome 5. V. Sequence features of the regions of 1,381,565 bp covered by twenty one physically assigned P1 and TAC clones.</title>
        <authorList>
            <person name="Kaneko T."/>
            <person name="Kotani H."/>
            <person name="Nakamura Y."/>
            <person name="Sato S."/>
            <person name="Asamizu E."/>
            <person name="Miyajima N."/>
            <person name="Tabata S."/>
        </authorList>
    </citation>
    <scope>NUCLEOTIDE SEQUENCE [LARGE SCALE GENOMIC DNA]</scope>
    <source>
        <strain>cv. Columbia</strain>
    </source>
</reference>
<reference key="2">
    <citation type="journal article" date="2017" name="Plant J.">
        <title>Araport11: a complete reannotation of the Arabidopsis thaliana reference genome.</title>
        <authorList>
            <person name="Cheng C.Y."/>
            <person name="Krishnakumar V."/>
            <person name="Chan A.P."/>
            <person name="Thibaud-Nissen F."/>
            <person name="Schobel S."/>
            <person name="Town C.D."/>
        </authorList>
    </citation>
    <scope>GENOME REANNOTATION</scope>
    <source>
        <strain>cv. Columbia</strain>
    </source>
</reference>
<reference key="3">
    <citation type="submission" date="2004-10" db="EMBL/GenBank/DDBJ databases">
        <title>Arabidopsis ORF clones.</title>
        <authorList>
            <person name="Cheuk R.F."/>
            <person name="Chen H."/>
            <person name="Kim C.J."/>
            <person name="Shinn P."/>
            <person name="Ecker J.R."/>
        </authorList>
    </citation>
    <scope>NUCLEOTIDE SEQUENCE [LARGE SCALE MRNA]</scope>
    <source>
        <strain>cv. Columbia</strain>
    </source>
</reference>
<reference key="4">
    <citation type="journal article" date="2004" name="Plant Cell">
        <title>Genome-wide analysis of Arabidopsis pentatricopeptide repeat proteins reveals their essential role in organelle biogenesis.</title>
        <authorList>
            <person name="Lurin C."/>
            <person name="Andres C."/>
            <person name="Aubourg S."/>
            <person name="Bellaoui M."/>
            <person name="Bitton F."/>
            <person name="Bruyere C."/>
            <person name="Caboche M."/>
            <person name="Debast C."/>
            <person name="Gualberto J."/>
            <person name="Hoffmann B."/>
            <person name="Lecharny A."/>
            <person name="Le Ret M."/>
            <person name="Martin-Magniette M.-L."/>
            <person name="Mireau H."/>
            <person name="Peeters N."/>
            <person name="Renou J.-P."/>
            <person name="Szurek B."/>
            <person name="Taconnat L."/>
            <person name="Small I."/>
        </authorList>
    </citation>
    <scope>GENE FAMILY</scope>
</reference>
<keyword id="KW-0150">Chloroplast</keyword>
<keyword id="KW-0934">Plastid</keyword>
<keyword id="KW-1185">Reference proteome</keyword>
<keyword id="KW-0677">Repeat</keyword>
<keyword id="KW-0809">Transit peptide</keyword>
<organism>
    <name type="scientific">Arabidopsis thaliana</name>
    <name type="common">Mouse-ear cress</name>
    <dbReference type="NCBI Taxonomy" id="3702"/>
    <lineage>
        <taxon>Eukaryota</taxon>
        <taxon>Viridiplantae</taxon>
        <taxon>Streptophyta</taxon>
        <taxon>Embryophyta</taxon>
        <taxon>Tracheophyta</taxon>
        <taxon>Spermatophyta</taxon>
        <taxon>Magnoliopsida</taxon>
        <taxon>eudicotyledons</taxon>
        <taxon>Gunneridae</taxon>
        <taxon>Pentapetalae</taxon>
        <taxon>rosids</taxon>
        <taxon>malvids</taxon>
        <taxon>Brassicales</taxon>
        <taxon>Brassicaceae</taxon>
        <taxon>Camelineae</taxon>
        <taxon>Arabidopsis</taxon>
    </lineage>
</organism>
<accession>Q66GP4</accession>
<accession>Q9FKI5</accession>
<proteinExistence type="evidence at transcript level"/>
<name>PP379_ARATH</name>
<dbReference type="EMBL" id="AB011484">
    <property type="protein sequence ID" value="BAB10598.1"/>
    <property type="status" value="ALT_INIT"/>
    <property type="molecule type" value="Genomic_DNA"/>
</dbReference>
<dbReference type="EMBL" id="CP002688">
    <property type="protein sequence ID" value="AED91939.1"/>
    <property type="molecule type" value="Genomic_DNA"/>
</dbReference>
<dbReference type="EMBL" id="BT015358">
    <property type="protein sequence ID" value="AAU05481.1"/>
    <property type="molecule type" value="mRNA"/>
</dbReference>
<dbReference type="EMBL" id="BT015886">
    <property type="protein sequence ID" value="AAU95422.1"/>
    <property type="molecule type" value="mRNA"/>
</dbReference>
<dbReference type="RefSeq" id="NP_196881.2">
    <property type="nucleotide sequence ID" value="NM_121380.3"/>
</dbReference>
<dbReference type="SMR" id="Q66GP4"/>
<dbReference type="BioGRID" id="16500">
    <property type="interactions" value="1"/>
</dbReference>
<dbReference type="FunCoup" id="Q66GP4">
    <property type="interactions" value="940"/>
</dbReference>
<dbReference type="iPTMnet" id="Q66GP4"/>
<dbReference type="PaxDb" id="3702-AT5G13770.1"/>
<dbReference type="ProteomicsDB" id="249263"/>
<dbReference type="EnsemblPlants" id="AT5G13770.1">
    <property type="protein sequence ID" value="AT5G13770.1"/>
    <property type="gene ID" value="AT5G13770"/>
</dbReference>
<dbReference type="GeneID" id="831222"/>
<dbReference type="Gramene" id="AT5G13770.1">
    <property type="protein sequence ID" value="AT5G13770.1"/>
    <property type="gene ID" value="AT5G13770"/>
</dbReference>
<dbReference type="KEGG" id="ath:AT5G13770"/>
<dbReference type="Araport" id="AT5G13770"/>
<dbReference type="TAIR" id="AT5G13770"/>
<dbReference type="eggNOG" id="KOG4197">
    <property type="taxonomic scope" value="Eukaryota"/>
</dbReference>
<dbReference type="HOGENOM" id="CLU_031331_0_0_1"/>
<dbReference type="InParanoid" id="Q66GP4"/>
<dbReference type="OMA" id="EKGFDKC"/>
<dbReference type="OrthoDB" id="185373at2759"/>
<dbReference type="PhylomeDB" id="Q66GP4"/>
<dbReference type="PRO" id="PR:Q66GP4"/>
<dbReference type="Proteomes" id="UP000006548">
    <property type="component" value="Chromosome 5"/>
</dbReference>
<dbReference type="ExpressionAtlas" id="Q66GP4">
    <property type="expression patterns" value="baseline and differential"/>
</dbReference>
<dbReference type="GO" id="GO:0009507">
    <property type="term" value="C:chloroplast"/>
    <property type="evidence" value="ECO:0007669"/>
    <property type="project" value="UniProtKB-SubCell"/>
</dbReference>
<dbReference type="GO" id="GO:0003729">
    <property type="term" value="F:mRNA binding"/>
    <property type="evidence" value="ECO:0000314"/>
    <property type="project" value="TAIR"/>
</dbReference>
<dbReference type="GO" id="GO:0009658">
    <property type="term" value="P:chloroplast organization"/>
    <property type="evidence" value="ECO:0000315"/>
    <property type="project" value="TAIR"/>
</dbReference>
<dbReference type="Gene3D" id="1.25.40.10">
    <property type="entry name" value="Tetratricopeptide repeat domain"/>
    <property type="match status" value="3"/>
</dbReference>
<dbReference type="InterPro" id="IPR002885">
    <property type="entry name" value="Pentatricopeptide_rpt"/>
</dbReference>
<dbReference type="InterPro" id="IPR011990">
    <property type="entry name" value="TPR-like_helical_dom_sf"/>
</dbReference>
<dbReference type="NCBIfam" id="TIGR00756">
    <property type="entry name" value="PPR"/>
    <property type="match status" value="5"/>
</dbReference>
<dbReference type="PANTHER" id="PTHR47936:SF1">
    <property type="entry name" value="PENTATRICOPEPTIDE REPEAT-CONTAINING PROTEIN GUN1, CHLOROPLASTIC"/>
    <property type="match status" value="1"/>
</dbReference>
<dbReference type="PANTHER" id="PTHR47936">
    <property type="entry name" value="PPR_LONG DOMAIN-CONTAINING PROTEIN"/>
    <property type="match status" value="1"/>
</dbReference>
<dbReference type="Pfam" id="PF01535">
    <property type="entry name" value="PPR"/>
    <property type="match status" value="3"/>
</dbReference>
<dbReference type="Pfam" id="PF13041">
    <property type="entry name" value="PPR_2"/>
    <property type="match status" value="1"/>
</dbReference>
<dbReference type="SUPFAM" id="SSF81901">
    <property type="entry name" value="HCP-like"/>
    <property type="match status" value="1"/>
</dbReference>
<dbReference type="PROSITE" id="PS51375">
    <property type="entry name" value="PPR"/>
    <property type="match status" value="12"/>
</dbReference>
<evidence type="ECO:0000255" key="1"/>
<evidence type="ECO:0000305" key="2"/>
<gene>
    <name type="ordered locus">At5g13770</name>
    <name type="ORF">MXE10.6</name>
</gene>